<sequence>MALYREGKAAMAADGTVTGTGTKWQSSLSLIRPGATIMFLSSPIQMAVVNKVVSDTEIKAITTNGAVVASTDYAILLSDSLTVDGLAQDVAETLRYYQSQETVIADAVEFFKEFDFESLQNLANQIKADSEASESSAAAAAASESKAKTSEDNAKSSENAAKNSEVAAETTRDQIQQIIDNAGDQSTLVVLAQPDGFDSIGRVSSFAALRNLKPKKSGQHVLLTSYYDGWAAENKMPTGGGEFISSIGTATDDGGYIAAGPGYYWTRVVNNNSFTAEDFGCKTTATPPPNFNVLPAELFDNTAMMQAAFNLAISKSFKLNLSTGTYYFESSDTLRITGPIHIEGRPGTVFYHNPSNKANPKTDAFMNISGCSMGRISSINCFSNSYLGKGINFDRSVGDNRKLVLEHVYVDTFRWGFYVGEPECINQIEFHSCRAQSNYFQGIFIESFKEGQQYGHSAPVHFFNTICNGNGPTSFALGATYKTTKNEYIKVMDSVNDVGCQAYFQGLSNVQYIGGQLSGHGSPRNTSLATITQCNSFIIYGTDLEDINGFTTDGTAITTDNIDTIESNYLKDISGAAIVVSSCLGFKIDSPHIFKINTLSTIKLMNNTYNYEIGGFTPDEALKYNVWDANGLATNRISGVIHPRLVNSQLGINSVAFDNMSNKLDVSSLIHNETSQIIGLIPSTGSNVPHTRIMWSNGAMYSSTDLNNGFRLNYLSNHNEPLTPMHLYNEFSVSEFGGSVTESNALDEIKYIFIQTTYANSGDGRFIIQALDASGSVLSSNWYSPQSFNSTFPISGFVRFDVPTGAKKIRYGFVNSANYTGSLRSHFMSGFAYNKRFFLKIYAVYNDLGRYGQFEPPYSVAIDRFRVGDNTTQMPSIPASSATDVAGVNEVINSLLASLKANGFMSS</sequence>
<dbReference type="EMBL" id="MW672037">
    <property type="protein sequence ID" value="QTP95996.1"/>
    <property type="molecule type" value="Genomic_DNA"/>
</dbReference>
<dbReference type="SMR" id="P0DTN7"/>
<dbReference type="Proteomes" id="UP000828062">
    <property type="component" value="Segment"/>
</dbReference>
<dbReference type="GO" id="GO:0098024">
    <property type="term" value="C:virus tail, fiber"/>
    <property type="evidence" value="ECO:0007669"/>
    <property type="project" value="UniProtKB-KW"/>
</dbReference>
<dbReference type="GO" id="GO:0098671">
    <property type="term" value="P:adhesion receptor-mediated virion attachment to host cell"/>
    <property type="evidence" value="ECO:0007669"/>
    <property type="project" value="UniProtKB-KW"/>
</dbReference>
<dbReference type="GO" id="GO:0098994">
    <property type="term" value="P:symbiont entry into host cell via disruption of host cell envelope"/>
    <property type="evidence" value="ECO:0007669"/>
    <property type="project" value="UniProtKB-KW"/>
</dbReference>
<dbReference type="GO" id="GO:0098996">
    <property type="term" value="P:symbiont entry into host cell via disruption of host cell glycocalyx"/>
    <property type="evidence" value="ECO:0000314"/>
    <property type="project" value="UniProtKB"/>
</dbReference>
<dbReference type="Gene3D" id="6.10.140.1630">
    <property type="match status" value="1"/>
</dbReference>
<organismHost>
    <name type="scientific">Klebsiella</name>
    <dbReference type="NCBI Taxonomy" id="570"/>
</organismHost>
<evidence type="ECO:0000250" key="1">
    <source>
        <dbReference type="UniProtKB" id="K9L8K6"/>
    </source>
</evidence>
<evidence type="ECO:0000250" key="2">
    <source>
        <dbReference type="UniProtKB" id="P0DTN8"/>
    </source>
</evidence>
<evidence type="ECO:0000256" key="3">
    <source>
        <dbReference type="SAM" id="MobiDB-lite"/>
    </source>
</evidence>
<evidence type="ECO:0000269" key="4">
    <source>
    </source>
</evidence>
<evidence type="ECO:0000303" key="5">
    <source>
    </source>
</evidence>
<evidence type="ECO:0000305" key="6"/>
<gene>
    <name evidence="5" type="ORF">ORF61</name>
</gene>
<keyword id="KW-1238">Degradation of host capsule during virus entry</keyword>
<keyword id="KW-1235">Degradation of host cell envelope components during virus entry</keyword>
<keyword id="KW-0945">Host-virus interaction</keyword>
<keyword id="KW-1233">Viral attachment to host adhesion receptor</keyword>
<keyword id="KW-1161">Viral attachment to host cell</keyword>
<keyword id="KW-1230">Viral tail fiber protein</keyword>
<keyword id="KW-1227">Viral tail protein</keyword>
<keyword id="KW-0946">Virion</keyword>
<keyword id="KW-1160">Virus entry into host cell</keyword>
<proteinExistence type="inferred from homology"/>
<protein>
    <recommendedName>
        <fullName evidence="6">Depolymerase, capsule K2-specific</fullName>
        <shortName evidence="6">DepoB1</shortName>
    </recommendedName>
    <alternativeName>
        <fullName evidence="5">B1dep</fullName>
    </alternativeName>
    <alternativeName>
        <fullName evidence="2">Tail spike protein</fullName>
    </alternativeName>
</protein>
<feature type="chain" id="PRO_0000458738" description="Depolymerase, capsule K2-specific">
    <location>
        <begin position="1"/>
        <end position="907"/>
    </location>
</feature>
<feature type="region of interest" description="Disordered" evidence="3">
    <location>
        <begin position="137"/>
        <end position="169"/>
    </location>
</feature>
<feature type="compositionally biased region" description="Basic and acidic residues" evidence="3">
    <location>
        <begin position="145"/>
        <end position="155"/>
    </location>
</feature>
<comment type="function">
    <text evidence="4">Functions as a receptor binding protein (RBP) and probably mediates the attachment to the host capsular exopolysaccharides (PubMed:33801047). Displays a depolymerase activity that specifically degrades the K2-type polysaccharides of Klebsiella pneumoniae capsule, which allows the phage to reach the host cell membrane and bind the entry receptor (PubMed:33801047).</text>
</comment>
<comment type="subunit">
    <text evidence="1">Homotrimer.</text>
</comment>
<comment type="subcellular location">
    <subcellularLocation>
        <location evidence="6">Virion</location>
    </subcellularLocation>
    <text evidence="6">Tail appendage.</text>
</comment>
<comment type="domain">
    <text evidence="2">The N-terminus contains an extended triple helical bundle. The central part is a beta-helical domain, which forms a negatively charged cavity at the interface between neighboring monomers. This cavity may contain the active site. The C-terminus is formed by 3 four-stranded beta-sandwich folds.</text>
</comment>
<comment type="similarity">
    <text evidence="6">In the N-terminal section; belongs to the Webervirus depolymerase family.</text>
</comment>
<comment type="similarity">
    <text evidence="6">In the C-terminal section; belongs to the K2-specific depolymerase family.</text>
</comment>
<organism>
    <name type="scientific">Klebsiella phage B1</name>
    <name type="common">Bacteriophage B1</name>
    <dbReference type="NCBI Taxonomy" id="2823852"/>
    <lineage>
        <taxon>Viruses</taxon>
        <taxon>Duplodnaviria</taxon>
        <taxon>Heunggongvirae</taxon>
        <taxon>Uroviricota</taxon>
        <taxon>Caudoviricetes</taxon>
        <taxon>Drexlerviridae</taxon>
        <taxon>Webervirus</taxon>
    </lineage>
</organism>
<name>DEPOL_BPKB1</name>
<reference key="1">
    <citation type="journal article" date="2021" name="Microorganisms">
        <title>Isolation and Characterization of a Novel Lytic Bacteriophage against the K2 Capsule-Expressing Hypervirulent Klebsiella pneumoniae Strain 52145, and Identification of Its Functional Depolymerase.</title>
        <authorList>
            <person name="Pertics B.Z."/>
            <person name="Cox A."/>
            <person name="Nyul A."/>
            <person name="Szamek N."/>
            <person name="Kovacs T."/>
            <person name="Schneider G."/>
        </authorList>
    </citation>
    <scope>NUCLEOTIDE SEQUENCE [GENOMIC DNA]</scope>
    <scope>FUNCTION</scope>
</reference>
<reference key="2">
    <citation type="journal article" date="2019" name="Front. Microbiol.">
        <title>Modeling the Architecture of Depolymerase-Containing Receptor Binding Proteins in Klebsiella Phages.</title>
        <authorList>
            <person name="Latka A."/>
            <person name="Leiman P.G."/>
            <person name="Drulis-Kawa Z."/>
            <person name="Briers Y."/>
        </authorList>
    </citation>
    <scope>REVIEW</scope>
</reference>
<accession>P0DTN7</accession>